<reference key="1">
    <citation type="journal article" date="2006" name="Proc. Natl. Acad. Sci. U.S.A.">
        <title>Genome reduction in Leptospira borgpetersenii reflects limited transmission potential.</title>
        <authorList>
            <person name="Bulach D.M."/>
            <person name="Zuerner R.L."/>
            <person name="Wilson P."/>
            <person name="Seemann T."/>
            <person name="McGrath A."/>
            <person name="Cullen P.A."/>
            <person name="Davis J."/>
            <person name="Johnson M."/>
            <person name="Kuczek E."/>
            <person name="Alt D.P."/>
            <person name="Peterson-Burch B."/>
            <person name="Coppel R.L."/>
            <person name="Rood J.I."/>
            <person name="Davies J.K."/>
            <person name="Adler B."/>
        </authorList>
    </citation>
    <scope>NUCLEOTIDE SEQUENCE [LARGE SCALE GENOMIC DNA]</scope>
    <source>
        <strain>JB197</strain>
    </source>
</reference>
<keyword id="KW-0030">Aminoacyl-tRNA synthetase</keyword>
<keyword id="KW-0067">ATP-binding</keyword>
<keyword id="KW-0963">Cytoplasm</keyword>
<keyword id="KW-0436">Ligase</keyword>
<keyword id="KW-0479">Metal-binding</keyword>
<keyword id="KW-0547">Nucleotide-binding</keyword>
<keyword id="KW-0648">Protein biosynthesis</keyword>
<keyword id="KW-0862">Zinc</keyword>
<protein>
    <recommendedName>
        <fullName evidence="1">Isoleucine--tRNA ligase</fullName>
        <ecNumber evidence="1">6.1.1.5</ecNumber>
    </recommendedName>
    <alternativeName>
        <fullName evidence="1">Isoleucyl-tRNA synthetase</fullName>
        <shortName evidence="1">IleRS</shortName>
    </alternativeName>
</protein>
<feature type="chain" id="PRO_1000022088" description="Isoleucine--tRNA ligase">
    <location>
        <begin position="1"/>
        <end position="914"/>
    </location>
</feature>
<feature type="short sequence motif" description="'HIGH' region">
    <location>
        <begin position="64"/>
        <end position="74"/>
    </location>
</feature>
<feature type="short sequence motif" description="'KMSKS' region">
    <location>
        <begin position="598"/>
        <end position="602"/>
    </location>
</feature>
<feature type="binding site" evidence="1">
    <location>
        <position position="557"/>
    </location>
    <ligand>
        <name>L-isoleucyl-5'-AMP</name>
        <dbReference type="ChEBI" id="CHEBI:178002"/>
    </ligand>
</feature>
<feature type="binding site" evidence="1">
    <location>
        <position position="601"/>
    </location>
    <ligand>
        <name>ATP</name>
        <dbReference type="ChEBI" id="CHEBI:30616"/>
    </ligand>
</feature>
<feature type="binding site" evidence="1">
    <location>
        <position position="889"/>
    </location>
    <ligand>
        <name>Zn(2+)</name>
        <dbReference type="ChEBI" id="CHEBI:29105"/>
    </ligand>
</feature>
<feature type="binding site" evidence="1">
    <location>
        <position position="892"/>
    </location>
    <ligand>
        <name>Zn(2+)</name>
        <dbReference type="ChEBI" id="CHEBI:29105"/>
    </ligand>
</feature>
<feature type="binding site" evidence="1">
    <location>
        <position position="906"/>
    </location>
    <ligand>
        <name>Zn(2+)</name>
        <dbReference type="ChEBI" id="CHEBI:29105"/>
    </ligand>
</feature>
<feature type="binding site" evidence="1">
    <location>
        <position position="909"/>
    </location>
    <ligand>
        <name>Zn(2+)</name>
        <dbReference type="ChEBI" id="CHEBI:29105"/>
    </ligand>
</feature>
<organism>
    <name type="scientific">Leptospira borgpetersenii serovar Hardjo-bovis (strain JB197)</name>
    <dbReference type="NCBI Taxonomy" id="355277"/>
    <lineage>
        <taxon>Bacteria</taxon>
        <taxon>Pseudomonadati</taxon>
        <taxon>Spirochaetota</taxon>
        <taxon>Spirochaetia</taxon>
        <taxon>Leptospirales</taxon>
        <taxon>Leptospiraceae</taxon>
        <taxon>Leptospira</taxon>
    </lineage>
</organism>
<comment type="function">
    <text evidence="1">Catalyzes the attachment of isoleucine to tRNA(Ile). As IleRS can inadvertently accommodate and process structurally similar amino acids such as valine, to avoid such errors it has two additional distinct tRNA(Ile)-dependent editing activities. One activity is designated as 'pretransfer' editing and involves the hydrolysis of activated Val-AMP. The other activity is designated 'posttransfer' editing and involves deacylation of mischarged Val-tRNA(Ile).</text>
</comment>
<comment type="catalytic activity">
    <reaction evidence="1">
        <text>tRNA(Ile) + L-isoleucine + ATP = L-isoleucyl-tRNA(Ile) + AMP + diphosphate</text>
        <dbReference type="Rhea" id="RHEA:11060"/>
        <dbReference type="Rhea" id="RHEA-COMP:9666"/>
        <dbReference type="Rhea" id="RHEA-COMP:9695"/>
        <dbReference type="ChEBI" id="CHEBI:30616"/>
        <dbReference type="ChEBI" id="CHEBI:33019"/>
        <dbReference type="ChEBI" id="CHEBI:58045"/>
        <dbReference type="ChEBI" id="CHEBI:78442"/>
        <dbReference type="ChEBI" id="CHEBI:78528"/>
        <dbReference type="ChEBI" id="CHEBI:456215"/>
        <dbReference type="EC" id="6.1.1.5"/>
    </reaction>
</comment>
<comment type="cofactor">
    <cofactor evidence="1">
        <name>Zn(2+)</name>
        <dbReference type="ChEBI" id="CHEBI:29105"/>
    </cofactor>
    <text evidence="1">Binds 1 zinc ion per subunit.</text>
</comment>
<comment type="subunit">
    <text evidence="1">Monomer.</text>
</comment>
<comment type="subcellular location">
    <subcellularLocation>
        <location evidence="1">Cytoplasm</location>
    </subcellularLocation>
</comment>
<comment type="domain">
    <text evidence="1">IleRS has two distinct active sites: one for aminoacylation and one for editing. The misactivated valine is translocated from the active site to the editing site, which sterically excludes the correctly activated isoleucine. The single editing site contains two valyl binding pockets, one specific for each substrate (Val-AMP or Val-tRNA(Ile)).</text>
</comment>
<comment type="similarity">
    <text evidence="1">Belongs to the class-I aminoacyl-tRNA synthetase family. IleS type 1 subfamily.</text>
</comment>
<dbReference type="EC" id="6.1.1.5" evidence="1"/>
<dbReference type="EMBL" id="CP000350">
    <property type="protein sequence ID" value="ABJ76744.1"/>
    <property type="molecule type" value="Genomic_DNA"/>
</dbReference>
<dbReference type="RefSeq" id="WP_011669695.1">
    <property type="nucleotide sequence ID" value="NC_008510.1"/>
</dbReference>
<dbReference type="SMR" id="Q04QS6"/>
<dbReference type="KEGG" id="lbj:LBJ_2270"/>
<dbReference type="HOGENOM" id="CLU_001493_7_0_12"/>
<dbReference type="Proteomes" id="UP000000656">
    <property type="component" value="Chromosome 1"/>
</dbReference>
<dbReference type="GO" id="GO:0005829">
    <property type="term" value="C:cytosol"/>
    <property type="evidence" value="ECO:0007669"/>
    <property type="project" value="TreeGrafter"/>
</dbReference>
<dbReference type="GO" id="GO:0002161">
    <property type="term" value="F:aminoacyl-tRNA deacylase activity"/>
    <property type="evidence" value="ECO:0007669"/>
    <property type="project" value="InterPro"/>
</dbReference>
<dbReference type="GO" id="GO:0005524">
    <property type="term" value="F:ATP binding"/>
    <property type="evidence" value="ECO:0007669"/>
    <property type="project" value="UniProtKB-UniRule"/>
</dbReference>
<dbReference type="GO" id="GO:0004822">
    <property type="term" value="F:isoleucine-tRNA ligase activity"/>
    <property type="evidence" value="ECO:0007669"/>
    <property type="project" value="UniProtKB-UniRule"/>
</dbReference>
<dbReference type="GO" id="GO:0000049">
    <property type="term" value="F:tRNA binding"/>
    <property type="evidence" value="ECO:0007669"/>
    <property type="project" value="InterPro"/>
</dbReference>
<dbReference type="GO" id="GO:0008270">
    <property type="term" value="F:zinc ion binding"/>
    <property type="evidence" value="ECO:0007669"/>
    <property type="project" value="UniProtKB-UniRule"/>
</dbReference>
<dbReference type="GO" id="GO:0006428">
    <property type="term" value="P:isoleucyl-tRNA aminoacylation"/>
    <property type="evidence" value="ECO:0007669"/>
    <property type="project" value="UniProtKB-UniRule"/>
</dbReference>
<dbReference type="CDD" id="cd07960">
    <property type="entry name" value="Anticodon_Ia_Ile_BEm"/>
    <property type="match status" value="1"/>
</dbReference>
<dbReference type="CDD" id="cd00818">
    <property type="entry name" value="IleRS_core"/>
    <property type="match status" value="1"/>
</dbReference>
<dbReference type="Gene3D" id="1.10.730.20">
    <property type="match status" value="1"/>
</dbReference>
<dbReference type="Gene3D" id="3.40.50.620">
    <property type="entry name" value="HUPs"/>
    <property type="match status" value="2"/>
</dbReference>
<dbReference type="Gene3D" id="1.10.10.830">
    <property type="entry name" value="Ile-tRNA synthetase CP2 domain-like"/>
    <property type="match status" value="1"/>
</dbReference>
<dbReference type="Gene3D" id="3.90.740.10">
    <property type="entry name" value="Valyl/Leucyl/Isoleucyl-tRNA synthetase, editing domain"/>
    <property type="match status" value="1"/>
</dbReference>
<dbReference type="HAMAP" id="MF_02002">
    <property type="entry name" value="Ile_tRNA_synth_type1"/>
    <property type="match status" value="1"/>
</dbReference>
<dbReference type="InterPro" id="IPR001412">
    <property type="entry name" value="aa-tRNA-synth_I_CS"/>
</dbReference>
<dbReference type="InterPro" id="IPR002300">
    <property type="entry name" value="aa-tRNA-synth_Ia"/>
</dbReference>
<dbReference type="InterPro" id="IPR033708">
    <property type="entry name" value="Anticodon_Ile_BEm"/>
</dbReference>
<dbReference type="InterPro" id="IPR002301">
    <property type="entry name" value="Ile-tRNA-ligase"/>
</dbReference>
<dbReference type="InterPro" id="IPR023585">
    <property type="entry name" value="Ile-tRNA-ligase_type1"/>
</dbReference>
<dbReference type="InterPro" id="IPR050081">
    <property type="entry name" value="Ile-tRNA_ligase"/>
</dbReference>
<dbReference type="InterPro" id="IPR013155">
    <property type="entry name" value="M/V/L/I-tRNA-synth_anticd-bd"/>
</dbReference>
<dbReference type="InterPro" id="IPR014729">
    <property type="entry name" value="Rossmann-like_a/b/a_fold"/>
</dbReference>
<dbReference type="InterPro" id="IPR009080">
    <property type="entry name" value="tRNAsynth_Ia_anticodon-bd"/>
</dbReference>
<dbReference type="InterPro" id="IPR009008">
    <property type="entry name" value="Val/Leu/Ile-tRNA-synth_edit"/>
</dbReference>
<dbReference type="InterPro" id="IPR010663">
    <property type="entry name" value="Znf_FPG/IleRS"/>
</dbReference>
<dbReference type="NCBIfam" id="TIGR00392">
    <property type="entry name" value="ileS"/>
    <property type="match status" value="1"/>
</dbReference>
<dbReference type="PANTHER" id="PTHR42765:SF1">
    <property type="entry name" value="ISOLEUCINE--TRNA LIGASE, MITOCHONDRIAL"/>
    <property type="match status" value="1"/>
</dbReference>
<dbReference type="PANTHER" id="PTHR42765">
    <property type="entry name" value="SOLEUCYL-TRNA SYNTHETASE"/>
    <property type="match status" value="1"/>
</dbReference>
<dbReference type="Pfam" id="PF08264">
    <property type="entry name" value="Anticodon_1"/>
    <property type="match status" value="1"/>
</dbReference>
<dbReference type="Pfam" id="PF00133">
    <property type="entry name" value="tRNA-synt_1"/>
    <property type="match status" value="1"/>
</dbReference>
<dbReference type="Pfam" id="PF06827">
    <property type="entry name" value="zf-FPG_IleRS"/>
    <property type="match status" value="1"/>
</dbReference>
<dbReference type="PRINTS" id="PR00984">
    <property type="entry name" value="TRNASYNTHILE"/>
</dbReference>
<dbReference type="SUPFAM" id="SSF47323">
    <property type="entry name" value="Anticodon-binding domain of a subclass of class I aminoacyl-tRNA synthetases"/>
    <property type="match status" value="1"/>
</dbReference>
<dbReference type="SUPFAM" id="SSF52374">
    <property type="entry name" value="Nucleotidylyl transferase"/>
    <property type="match status" value="1"/>
</dbReference>
<dbReference type="SUPFAM" id="SSF50677">
    <property type="entry name" value="ValRS/IleRS/LeuRS editing domain"/>
    <property type="match status" value="1"/>
</dbReference>
<dbReference type="PROSITE" id="PS00178">
    <property type="entry name" value="AA_TRNA_LIGASE_I"/>
    <property type="match status" value="1"/>
</dbReference>
<proteinExistence type="inferred from homology"/>
<sequence length="914" mass="104458">MSETQKENPYSSTVLLPKTDFPMKADLAKREPEQIRSWKQNRIFRKMREQRSGKKEFVLHDGPPYANGNFHLGHALNKILKDTIIKSKSLAGFYADMIPGWDCHGLPIEVQVLKNLGKKVRETGPEELRQLCRKYAEEFVGKQGDDLSRFLCFWDEGRIYKTMSPDFEAKIVEVFGELFKKGYVYRGKKPVYWSIDLATAHAEAEIEYYPHISPSIYVKFPIIGEKKRFCLIWTTTPWTLPANLAICFNRKIEYSIFKTESSEELILADALAENVTITTGVALTKLKPITSEELAALKFQHPFVDRISVSLFGDHVTLEAGTGCVHTAPGHGQDDYKVGLAAGLEPFSPVDDYGRYTDEFPLMQGKKVFDANPEIIQLLRDKGLLLYHGELEHSYPHSWRSKKPLIFRATPQWFFKIDFQDLREKSLSAIDGVRWIPSWGITRIRSMVETRPDWCLSRQRNWGVPIPAFTCESCGQTHIDDASIQFFTKMVREKGIEIWYSEETKDLLPPKTKCGKCGNDSFKKGNDILDVWFDSGVSNFSVLGERKDEPPADLYLEGSDQHRGWFQSSLWPSMALRGIPPYKAVLTHGYVLDEKGRAMSKSLGNGIDPTADIIQVYGADILRLWVSSLDFRDDIKVGKESLKIVSEQYRKIRNTFRYLLGNLDGHTPEQNLPFEELEELDRFYLSKLAGFVEDAVASYETYQFHQIYQKLILFCTVTLSQDYFDMIRDRMYCDLRDSKSRRSSSTALQYILDSLCILVAPILSFTAEEVWTSNGKKDSVFLQTFPDLKSWKNQSLEDKFESALQAREVVQKALEIARQEGKLGKSLEAALEIVSKSGLSFGELLPKETLELLFVVSQIHEENPGMEVLSSHENEKFSVKVLKPLQGECPRCWRHTEDISKEGDLCGRCKSVVA</sequence>
<gene>
    <name evidence="1" type="primary">ileS</name>
    <name type="ordered locus">LBJ_2270</name>
</gene>
<evidence type="ECO:0000255" key="1">
    <source>
        <dbReference type="HAMAP-Rule" id="MF_02002"/>
    </source>
</evidence>
<name>SYI_LEPBJ</name>
<accession>Q04QS6</accession>